<feature type="chain" id="PRO_1000091225" description="UPF0102 protein VSAL_I2655">
    <location>
        <begin position="1"/>
        <end position="123"/>
    </location>
</feature>
<evidence type="ECO:0000255" key="1">
    <source>
        <dbReference type="HAMAP-Rule" id="MF_00048"/>
    </source>
</evidence>
<organism>
    <name type="scientific">Aliivibrio salmonicida (strain LFI1238)</name>
    <name type="common">Vibrio salmonicida (strain LFI1238)</name>
    <dbReference type="NCBI Taxonomy" id="316275"/>
    <lineage>
        <taxon>Bacteria</taxon>
        <taxon>Pseudomonadati</taxon>
        <taxon>Pseudomonadota</taxon>
        <taxon>Gammaproteobacteria</taxon>
        <taxon>Vibrionales</taxon>
        <taxon>Vibrionaceae</taxon>
        <taxon>Aliivibrio</taxon>
    </lineage>
</organism>
<gene>
    <name type="ordered locus">VSAL_I2655</name>
</gene>
<comment type="similarity">
    <text evidence="1">Belongs to the UPF0102 family.</text>
</comment>
<dbReference type="EMBL" id="FM178379">
    <property type="protein sequence ID" value="CAQ80339.1"/>
    <property type="molecule type" value="Genomic_DNA"/>
</dbReference>
<dbReference type="RefSeq" id="WP_012551110.1">
    <property type="nucleotide sequence ID" value="NC_011312.1"/>
</dbReference>
<dbReference type="SMR" id="B6ELI6"/>
<dbReference type="KEGG" id="vsa:VSAL_I2655"/>
<dbReference type="eggNOG" id="COG0792">
    <property type="taxonomic scope" value="Bacteria"/>
</dbReference>
<dbReference type="HOGENOM" id="CLU_115353_1_1_6"/>
<dbReference type="Proteomes" id="UP000001730">
    <property type="component" value="Chromosome 1"/>
</dbReference>
<dbReference type="GO" id="GO:0003676">
    <property type="term" value="F:nucleic acid binding"/>
    <property type="evidence" value="ECO:0007669"/>
    <property type="project" value="InterPro"/>
</dbReference>
<dbReference type="CDD" id="cd20736">
    <property type="entry name" value="PoNe_Nuclease"/>
    <property type="match status" value="1"/>
</dbReference>
<dbReference type="Gene3D" id="3.40.1350.10">
    <property type="match status" value="1"/>
</dbReference>
<dbReference type="HAMAP" id="MF_00048">
    <property type="entry name" value="UPF0102"/>
    <property type="match status" value="1"/>
</dbReference>
<dbReference type="InterPro" id="IPR011335">
    <property type="entry name" value="Restrct_endonuc-II-like"/>
</dbReference>
<dbReference type="InterPro" id="IPR011856">
    <property type="entry name" value="tRNA_endonuc-like_dom_sf"/>
</dbReference>
<dbReference type="InterPro" id="IPR003509">
    <property type="entry name" value="UPF0102_YraN-like"/>
</dbReference>
<dbReference type="NCBIfam" id="NF009150">
    <property type="entry name" value="PRK12497.1-3"/>
    <property type="match status" value="1"/>
</dbReference>
<dbReference type="NCBIfam" id="TIGR00252">
    <property type="entry name" value="YraN family protein"/>
    <property type="match status" value="1"/>
</dbReference>
<dbReference type="PANTHER" id="PTHR34039">
    <property type="entry name" value="UPF0102 PROTEIN YRAN"/>
    <property type="match status" value="1"/>
</dbReference>
<dbReference type="PANTHER" id="PTHR34039:SF1">
    <property type="entry name" value="UPF0102 PROTEIN YRAN"/>
    <property type="match status" value="1"/>
</dbReference>
<dbReference type="Pfam" id="PF02021">
    <property type="entry name" value="UPF0102"/>
    <property type="match status" value="1"/>
</dbReference>
<dbReference type="SUPFAM" id="SSF52980">
    <property type="entry name" value="Restriction endonuclease-like"/>
    <property type="match status" value="1"/>
</dbReference>
<name>Y2655_ALISL</name>
<reference key="1">
    <citation type="journal article" date="2008" name="BMC Genomics">
        <title>The genome sequence of the fish pathogen Aliivibrio salmonicida strain LFI1238 shows extensive evidence of gene decay.</title>
        <authorList>
            <person name="Hjerde E."/>
            <person name="Lorentzen M.S."/>
            <person name="Holden M.T."/>
            <person name="Seeger K."/>
            <person name="Paulsen S."/>
            <person name="Bason N."/>
            <person name="Churcher C."/>
            <person name="Harris D."/>
            <person name="Norbertczak H."/>
            <person name="Quail M.A."/>
            <person name="Sanders S."/>
            <person name="Thurston S."/>
            <person name="Parkhill J."/>
            <person name="Willassen N.P."/>
            <person name="Thomson N.R."/>
        </authorList>
    </citation>
    <scope>NUCLEOTIDE SEQUENCE [LARGE SCALE GENOMIC DNA]</scope>
    <source>
        <strain>LFI1238</strain>
    </source>
</reference>
<protein>
    <recommendedName>
        <fullName evidence="1">UPF0102 protein VSAL_I2655</fullName>
    </recommendedName>
</protein>
<sequence length="123" mass="14690">MEKKPNKRIKGEYYELMAKRYLETHQLTFIERNFYSKTGELDLIMRDRDSFVFVEVKYRASSNYGSAQEMVTWQKQRKLQRTALFWLMKNGLSVEHTSFRFDVVAIHSQGQDINWIKNAIVEG</sequence>
<proteinExistence type="inferred from homology"/>
<accession>B6ELI6</accession>